<reference key="1">
    <citation type="journal article" date="2004" name="Virology">
        <title>Comparative genomic analyses of frog virus 3, type species of the genus Ranavirus (family Iridoviridae).</title>
        <authorList>
            <person name="Tan W.G."/>
            <person name="Barkman T.J."/>
            <person name="Gregory Chinchar V."/>
            <person name="Essani K."/>
        </authorList>
    </citation>
    <scope>NUCLEOTIDE SEQUENCE [LARGE SCALE GENOMIC DNA]</scope>
</reference>
<feature type="chain" id="PRO_0000410576" description="Putative serine/threonine-protein kinase 019R">
    <location>
        <begin position="1"/>
        <end position="851"/>
    </location>
</feature>
<feature type="domain" description="Protein kinase" evidence="1">
    <location>
        <begin position="456"/>
        <end position="851"/>
    </location>
</feature>
<feature type="region of interest" description="Disordered" evidence="3">
    <location>
        <begin position="1"/>
        <end position="24"/>
    </location>
</feature>
<feature type="region of interest" description="Disordered" evidence="3">
    <location>
        <begin position="61"/>
        <end position="91"/>
    </location>
</feature>
<feature type="region of interest" description="Disordered" evidence="3">
    <location>
        <begin position="104"/>
        <end position="160"/>
    </location>
</feature>
<feature type="region of interest" description="Disordered" evidence="3">
    <location>
        <begin position="190"/>
        <end position="216"/>
    </location>
</feature>
<feature type="region of interest" description="Disordered" evidence="3">
    <location>
        <begin position="340"/>
        <end position="400"/>
    </location>
</feature>
<feature type="compositionally biased region" description="Low complexity" evidence="3">
    <location>
        <begin position="125"/>
        <end position="141"/>
    </location>
</feature>
<feature type="compositionally biased region" description="Basic residues" evidence="3">
    <location>
        <begin position="196"/>
        <end position="216"/>
    </location>
</feature>
<feature type="compositionally biased region" description="Low complexity" evidence="3">
    <location>
        <begin position="340"/>
        <end position="366"/>
    </location>
</feature>
<feature type="active site" description="Proton acceptor" evidence="1 2">
    <location>
        <position position="608"/>
    </location>
</feature>
<feature type="binding site" evidence="1">
    <location>
        <begin position="462"/>
        <end position="470"/>
    </location>
    <ligand>
        <name>ATP</name>
        <dbReference type="ChEBI" id="CHEBI:30616"/>
    </ligand>
</feature>
<feature type="binding site" evidence="1">
    <location>
        <position position="485"/>
    </location>
    <ligand>
        <name>ATP</name>
        <dbReference type="ChEBI" id="CHEBI:30616"/>
    </ligand>
</feature>
<gene>
    <name type="ORF">FV3-019R</name>
</gene>
<proteinExistence type="inferred from homology"/>
<organismHost>
    <name type="scientific">Dryophytes versicolor</name>
    <name type="common">chameleon treefrog</name>
    <dbReference type="NCBI Taxonomy" id="30343"/>
</organismHost>
<organismHost>
    <name type="scientific">Lithobates pipiens</name>
    <name type="common">Northern leopard frog</name>
    <name type="synonym">Rana pipiens</name>
    <dbReference type="NCBI Taxonomy" id="8404"/>
</organismHost>
<organismHost>
    <name type="scientific">Lithobates sylvaticus</name>
    <name type="common">Wood frog</name>
    <name type="synonym">Rana sylvatica</name>
    <dbReference type="NCBI Taxonomy" id="45438"/>
</organismHost>
<organismHost>
    <name type="scientific">Notophthalmus viridescens</name>
    <name type="common">Eastern newt</name>
    <name type="synonym">Triturus viridescens</name>
    <dbReference type="NCBI Taxonomy" id="8316"/>
</organismHost>
<dbReference type="EC" id="2.7.11.1"/>
<dbReference type="EMBL" id="AY548484">
    <property type="protein sequence ID" value="AAT09678.1"/>
    <property type="molecule type" value="Genomic_DNA"/>
</dbReference>
<dbReference type="RefSeq" id="YP_031597.1">
    <property type="nucleotide sequence ID" value="NC_005946.1"/>
</dbReference>
<dbReference type="KEGG" id="vg:2947739"/>
<dbReference type="Proteomes" id="UP000008770">
    <property type="component" value="Segment"/>
</dbReference>
<dbReference type="GO" id="GO:0005524">
    <property type="term" value="F:ATP binding"/>
    <property type="evidence" value="ECO:0007669"/>
    <property type="project" value="UniProtKB-KW"/>
</dbReference>
<dbReference type="GO" id="GO:0106310">
    <property type="term" value="F:protein serine kinase activity"/>
    <property type="evidence" value="ECO:0007669"/>
    <property type="project" value="RHEA"/>
</dbReference>
<dbReference type="GO" id="GO:0004674">
    <property type="term" value="F:protein serine/threonine kinase activity"/>
    <property type="evidence" value="ECO:0007669"/>
    <property type="project" value="UniProtKB-KW"/>
</dbReference>
<dbReference type="Gene3D" id="1.10.510.10">
    <property type="entry name" value="Transferase(Phosphotransferase) domain 1"/>
    <property type="match status" value="1"/>
</dbReference>
<dbReference type="InterPro" id="IPR014901">
    <property type="entry name" value="2-cysteine_adaptor"/>
</dbReference>
<dbReference type="InterPro" id="IPR011009">
    <property type="entry name" value="Kinase-like_dom_sf"/>
</dbReference>
<dbReference type="InterPro" id="IPR000719">
    <property type="entry name" value="Prot_kinase_dom"/>
</dbReference>
<dbReference type="InterPro" id="IPR017441">
    <property type="entry name" value="Protein_kinase_ATP_BS"/>
</dbReference>
<dbReference type="InterPro" id="IPR008271">
    <property type="entry name" value="Ser/Thr_kinase_AS"/>
</dbReference>
<dbReference type="Pfam" id="PF08793">
    <property type="entry name" value="2C_adapt"/>
    <property type="match status" value="5"/>
</dbReference>
<dbReference type="SMART" id="SM00220">
    <property type="entry name" value="S_TKc"/>
    <property type="match status" value="1"/>
</dbReference>
<dbReference type="SUPFAM" id="SSF56112">
    <property type="entry name" value="Protein kinase-like (PK-like)"/>
    <property type="match status" value="1"/>
</dbReference>
<dbReference type="PROSITE" id="PS00107">
    <property type="entry name" value="PROTEIN_KINASE_ATP"/>
    <property type="match status" value="1"/>
</dbReference>
<dbReference type="PROSITE" id="PS50011">
    <property type="entry name" value="PROTEIN_KINASE_DOM"/>
    <property type="match status" value="1"/>
</dbReference>
<dbReference type="PROSITE" id="PS00108">
    <property type="entry name" value="PROTEIN_KINASE_ST"/>
    <property type="match status" value="1"/>
</dbReference>
<evidence type="ECO:0000255" key="1">
    <source>
        <dbReference type="PROSITE-ProRule" id="PRU00159"/>
    </source>
</evidence>
<evidence type="ECO:0000255" key="2">
    <source>
        <dbReference type="PROSITE-ProRule" id="PRU10027"/>
    </source>
</evidence>
<evidence type="ECO:0000256" key="3">
    <source>
        <dbReference type="SAM" id="MobiDB-lite"/>
    </source>
</evidence>
<comment type="catalytic activity">
    <reaction>
        <text>L-seryl-[protein] + ATP = O-phospho-L-seryl-[protein] + ADP + H(+)</text>
        <dbReference type="Rhea" id="RHEA:17989"/>
        <dbReference type="Rhea" id="RHEA-COMP:9863"/>
        <dbReference type="Rhea" id="RHEA-COMP:11604"/>
        <dbReference type="ChEBI" id="CHEBI:15378"/>
        <dbReference type="ChEBI" id="CHEBI:29999"/>
        <dbReference type="ChEBI" id="CHEBI:30616"/>
        <dbReference type="ChEBI" id="CHEBI:83421"/>
        <dbReference type="ChEBI" id="CHEBI:456216"/>
        <dbReference type="EC" id="2.7.11.1"/>
    </reaction>
</comment>
<comment type="catalytic activity">
    <reaction>
        <text>L-threonyl-[protein] + ATP = O-phospho-L-threonyl-[protein] + ADP + H(+)</text>
        <dbReference type="Rhea" id="RHEA:46608"/>
        <dbReference type="Rhea" id="RHEA-COMP:11060"/>
        <dbReference type="Rhea" id="RHEA-COMP:11605"/>
        <dbReference type="ChEBI" id="CHEBI:15378"/>
        <dbReference type="ChEBI" id="CHEBI:30013"/>
        <dbReference type="ChEBI" id="CHEBI:30616"/>
        <dbReference type="ChEBI" id="CHEBI:61977"/>
        <dbReference type="ChEBI" id="CHEBI:456216"/>
        <dbReference type="EC" id="2.7.11.1"/>
    </reaction>
</comment>
<comment type="similarity">
    <text evidence="1">Belongs to the protein kinase superfamily. Ser/Thr protein kinase family.</text>
</comment>
<protein>
    <recommendedName>
        <fullName>Putative serine/threonine-protein kinase 019R</fullName>
        <ecNumber>2.7.11.1</ecNumber>
    </recommendedName>
</protein>
<accession>Q6GZV6</accession>
<organism>
    <name type="scientific">Frog virus 3 (isolate Goorha)</name>
    <name type="common">FV-3</name>
    <dbReference type="NCBI Taxonomy" id="654924"/>
    <lineage>
        <taxon>Viruses</taxon>
        <taxon>Varidnaviria</taxon>
        <taxon>Bamfordvirae</taxon>
        <taxon>Nucleocytoviricota</taxon>
        <taxon>Megaviricetes</taxon>
        <taxon>Pimascovirales</taxon>
        <taxon>Iridoviridae</taxon>
        <taxon>Alphairidovirinae</taxon>
        <taxon>Ranavirus</taxon>
        <taxon>Frog virus 3</taxon>
    </lineage>
</organism>
<keyword id="KW-0067">ATP-binding</keyword>
<keyword id="KW-0418">Kinase</keyword>
<keyword id="KW-0547">Nucleotide-binding</keyword>
<keyword id="KW-1185">Reference proteome</keyword>
<keyword id="KW-0723">Serine/threonine-protein kinase</keyword>
<keyword id="KW-0808">Transferase</keyword>
<name>019R_FRG3G</name>
<sequence length="851" mass="92929">MATNYCDEFERNPTRNPRTGRTIKRGGPVFRALERECSDGAARVFPAAAVRGAAAARAASPRVAAASPCPEFARDPTRNPRTGRPIKRGGPVFRALERECADYGGASPRRVSPARAFPNRRVSPARRQSPAEAAEASPCPEFARDPTRNPRTGRTIKRGGPTYRALEAECADYGRLSPIRSPWSDWSSTGLSPFRSHMRKSPARRSPARRSPARRSLARYTEHLTSDSETEVDYDARNVIRSQVGPGGVCERFAADPTRNPVTGSPLSRNDPLYTDLMEICKGYPDTPLTKSLTGEGTDDDTCEAFCRDPTRNPVTGQKMRRNGIEYQMFAEECDCSGISRPSGVSRTSGTSGSSGSSASSRPPNSFEAPGASSRPPNSFEASGAARVPGTPSVSRGEPRWMSSISTRHNYDESNPMSVAFRLRHVKDIRKFLRTVRPGRSGFCATDKGGWLGSAAVSDNVIGQGSWGSVHMVKFRDFPEEFVVKEAVLMSVSEKHRYKPTVVWDEWAAGSVPDEVVVNNMVTEIAATGMTPFVPLTAGAGACDSCNPQLLEKAAKVTKCYLQAMEAADFSLDRVLPTMSPDQAASALAQILLGLQSLQTTLGIMHNDIKAHNILVKRVPPGGYWKVTDSFNGQVFYIPNEGYLCMLADYGVVRLVKPAVGMDTLYGTRNARFVPRDVGRWGKGAGTEYVVTPIRSKISVVVRGGRFVGVEPNKAVRYWKNTDTSKVGDVITTNNVFYMGYDIEPDMQVQLDDTNSFPVWESRGDVADCVRTFVGGKRASQPGFHRLFYKKTGSAWEKAAETVAKQNPLFSGFTLDGSGLKYIRAATACAYIFPGMAVPRPGEREIESFTM</sequence>